<feature type="chain" id="PRO_0000228400" description="4-hydroxy-tetrahydrodipicolinate reductase">
    <location>
        <begin position="1"/>
        <end position="261"/>
    </location>
</feature>
<feature type="active site" description="Proton donor/acceptor" evidence="1">
    <location>
        <position position="151"/>
    </location>
</feature>
<feature type="active site" description="Proton donor" evidence="1">
    <location>
        <position position="155"/>
    </location>
</feature>
<feature type="binding site" evidence="1">
    <location>
        <begin position="9"/>
        <end position="14"/>
    </location>
    <ligand>
        <name>NAD(+)</name>
        <dbReference type="ChEBI" id="CHEBI:57540"/>
    </ligand>
</feature>
<feature type="binding site" evidence="1">
    <location>
        <position position="36"/>
    </location>
    <ligand>
        <name>NADP(+)</name>
        <dbReference type="ChEBI" id="CHEBI:58349"/>
    </ligand>
</feature>
<feature type="binding site" evidence="1">
    <location>
        <begin position="97"/>
        <end position="99"/>
    </location>
    <ligand>
        <name>NAD(+)</name>
        <dbReference type="ChEBI" id="CHEBI:57540"/>
    </ligand>
</feature>
<feature type="binding site" evidence="1">
    <location>
        <begin position="118"/>
        <end position="121"/>
    </location>
    <ligand>
        <name>NAD(+)</name>
        <dbReference type="ChEBI" id="CHEBI:57540"/>
    </ligand>
</feature>
<feature type="binding site" evidence="1">
    <location>
        <position position="152"/>
    </location>
    <ligand>
        <name>(S)-2,3,4,5-tetrahydrodipicolinate</name>
        <dbReference type="ChEBI" id="CHEBI:16845"/>
    </ligand>
</feature>
<feature type="binding site" evidence="1">
    <location>
        <begin position="161"/>
        <end position="162"/>
    </location>
    <ligand>
        <name>(S)-2,3,4,5-tetrahydrodipicolinate</name>
        <dbReference type="ChEBI" id="CHEBI:16845"/>
    </ligand>
</feature>
<keyword id="KW-0028">Amino-acid biosynthesis</keyword>
<keyword id="KW-0963">Cytoplasm</keyword>
<keyword id="KW-0220">Diaminopimelate biosynthesis</keyword>
<keyword id="KW-0457">Lysine biosynthesis</keyword>
<keyword id="KW-0520">NAD</keyword>
<keyword id="KW-0521">NADP</keyword>
<keyword id="KW-0560">Oxidoreductase</keyword>
<name>DAPB_WOLPM</name>
<proteinExistence type="inferred from homology"/>
<dbReference type="EC" id="1.17.1.8" evidence="1"/>
<dbReference type="EMBL" id="AE017196">
    <property type="protein sequence ID" value="AAS14099.1"/>
    <property type="molecule type" value="Genomic_DNA"/>
</dbReference>
<dbReference type="RefSeq" id="WP_010962542.1">
    <property type="nucleotide sequence ID" value="NZ_OX384529.1"/>
</dbReference>
<dbReference type="SMR" id="Q73I13"/>
<dbReference type="EnsemblBacteria" id="AAS14099">
    <property type="protein sequence ID" value="AAS14099"/>
    <property type="gene ID" value="WD_0370"/>
</dbReference>
<dbReference type="GeneID" id="70035862"/>
<dbReference type="KEGG" id="wol:WD_0370"/>
<dbReference type="eggNOG" id="COG0289">
    <property type="taxonomic scope" value="Bacteria"/>
</dbReference>
<dbReference type="UniPathway" id="UPA00034">
    <property type="reaction ID" value="UER00018"/>
</dbReference>
<dbReference type="Proteomes" id="UP000008215">
    <property type="component" value="Chromosome"/>
</dbReference>
<dbReference type="GO" id="GO:0005737">
    <property type="term" value="C:cytoplasm"/>
    <property type="evidence" value="ECO:0007669"/>
    <property type="project" value="UniProtKB-SubCell"/>
</dbReference>
<dbReference type="GO" id="GO:0008839">
    <property type="term" value="F:4-hydroxy-tetrahydrodipicolinate reductase"/>
    <property type="evidence" value="ECO:0007669"/>
    <property type="project" value="UniProtKB-EC"/>
</dbReference>
<dbReference type="GO" id="GO:0051287">
    <property type="term" value="F:NAD binding"/>
    <property type="evidence" value="ECO:0007669"/>
    <property type="project" value="UniProtKB-UniRule"/>
</dbReference>
<dbReference type="GO" id="GO:0050661">
    <property type="term" value="F:NADP binding"/>
    <property type="evidence" value="ECO:0007669"/>
    <property type="project" value="UniProtKB-UniRule"/>
</dbReference>
<dbReference type="GO" id="GO:0016726">
    <property type="term" value="F:oxidoreductase activity, acting on CH or CH2 groups, NAD or NADP as acceptor"/>
    <property type="evidence" value="ECO:0007669"/>
    <property type="project" value="UniProtKB-UniRule"/>
</dbReference>
<dbReference type="GO" id="GO:0019877">
    <property type="term" value="P:diaminopimelate biosynthetic process"/>
    <property type="evidence" value="ECO:0007669"/>
    <property type="project" value="UniProtKB-UniRule"/>
</dbReference>
<dbReference type="GO" id="GO:0009089">
    <property type="term" value="P:lysine biosynthetic process via diaminopimelate"/>
    <property type="evidence" value="ECO:0007669"/>
    <property type="project" value="UniProtKB-UniRule"/>
</dbReference>
<dbReference type="CDD" id="cd02274">
    <property type="entry name" value="DHDPR_N"/>
    <property type="match status" value="1"/>
</dbReference>
<dbReference type="Gene3D" id="3.30.360.10">
    <property type="entry name" value="Dihydrodipicolinate Reductase, domain 2"/>
    <property type="match status" value="1"/>
</dbReference>
<dbReference type="Gene3D" id="3.40.50.720">
    <property type="entry name" value="NAD(P)-binding Rossmann-like Domain"/>
    <property type="match status" value="1"/>
</dbReference>
<dbReference type="HAMAP" id="MF_00102">
    <property type="entry name" value="DapB"/>
    <property type="match status" value="1"/>
</dbReference>
<dbReference type="InterPro" id="IPR022663">
    <property type="entry name" value="DapB_C"/>
</dbReference>
<dbReference type="InterPro" id="IPR000846">
    <property type="entry name" value="DapB_N"/>
</dbReference>
<dbReference type="InterPro" id="IPR022664">
    <property type="entry name" value="DapB_N_CS"/>
</dbReference>
<dbReference type="InterPro" id="IPR023940">
    <property type="entry name" value="DHDPR_bac"/>
</dbReference>
<dbReference type="InterPro" id="IPR036291">
    <property type="entry name" value="NAD(P)-bd_dom_sf"/>
</dbReference>
<dbReference type="NCBIfam" id="TIGR00036">
    <property type="entry name" value="dapB"/>
    <property type="match status" value="1"/>
</dbReference>
<dbReference type="PANTHER" id="PTHR20836:SF0">
    <property type="entry name" value="4-HYDROXY-TETRAHYDRODIPICOLINATE REDUCTASE 1, CHLOROPLASTIC-RELATED"/>
    <property type="match status" value="1"/>
</dbReference>
<dbReference type="PANTHER" id="PTHR20836">
    <property type="entry name" value="DIHYDRODIPICOLINATE REDUCTASE"/>
    <property type="match status" value="1"/>
</dbReference>
<dbReference type="Pfam" id="PF05173">
    <property type="entry name" value="DapB_C"/>
    <property type="match status" value="1"/>
</dbReference>
<dbReference type="Pfam" id="PF01113">
    <property type="entry name" value="DapB_N"/>
    <property type="match status" value="1"/>
</dbReference>
<dbReference type="PIRSF" id="PIRSF000161">
    <property type="entry name" value="DHPR"/>
    <property type="match status" value="1"/>
</dbReference>
<dbReference type="SUPFAM" id="SSF55347">
    <property type="entry name" value="Glyceraldehyde-3-phosphate dehydrogenase-like, C-terminal domain"/>
    <property type="match status" value="1"/>
</dbReference>
<dbReference type="SUPFAM" id="SSF51735">
    <property type="entry name" value="NAD(P)-binding Rossmann-fold domains"/>
    <property type="match status" value="1"/>
</dbReference>
<dbReference type="PROSITE" id="PS01298">
    <property type="entry name" value="DAPB"/>
    <property type="match status" value="1"/>
</dbReference>
<gene>
    <name evidence="1" type="primary">dapB</name>
    <name type="ordered locus">WD_0370</name>
</gene>
<comment type="function">
    <text evidence="1">Catalyzes the conversion of 4-hydroxy-tetrahydrodipicolinate (HTPA) to tetrahydrodipicolinate.</text>
</comment>
<comment type="catalytic activity">
    <reaction evidence="1">
        <text>(S)-2,3,4,5-tetrahydrodipicolinate + NAD(+) + H2O = (2S,4S)-4-hydroxy-2,3,4,5-tetrahydrodipicolinate + NADH + H(+)</text>
        <dbReference type="Rhea" id="RHEA:35323"/>
        <dbReference type="ChEBI" id="CHEBI:15377"/>
        <dbReference type="ChEBI" id="CHEBI:15378"/>
        <dbReference type="ChEBI" id="CHEBI:16845"/>
        <dbReference type="ChEBI" id="CHEBI:57540"/>
        <dbReference type="ChEBI" id="CHEBI:57945"/>
        <dbReference type="ChEBI" id="CHEBI:67139"/>
        <dbReference type="EC" id="1.17.1.8"/>
    </reaction>
</comment>
<comment type="catalytic activity">
    <reaction evidence="1">
        <text>(S)-2,3,4,5-tetrahydrodipicolinate + NADP(+) + H2O = (2S,4S)-4-hydroxy-2,3,4,5-tetrahydrodipicolinate + NADPH + H(+)</text>
        <dbReference type="Rhea" id="RHEA:35331"/>
        <dbReference type="ChEBI" id="CHEBI:15377"/>
        <dbReference type="ChEBI" id="CHEBI:15378"/>
        <dbReference type="ChEBI" id="CHEBI:16845"/>
        <dbReference type="ChEBI" id="CHEBI:57783"/>
        <dbReference type="ChEBI" id="CHEBI:58349"/>
        <dbReference type="ChEBI" id="CHEBI:67139"/>
        <dbReference type="EC" id="1.17.1.8"/>
    </reaction>
</comment>
<comment type="pathway">
    <text evidence="1">Amino-acid biosynthesis; L-lysine biosynthesis via DAP pathway; (S)-tetrahydrodipicolinate from L-aspartate: step 4/4.</text>
</comment>
<comment type="subcellular location">
    <subcellularLocation>
        <location evidence="1">Cytoplasm</location>
    </subcellularLocation>
</comment>
<comment type="similarity">
    <text evidence="1">Belongs to the DapB family.</text>
</comment>
<comment type="caution">
    <text evidence="2">Was originally thought to be a dihydrodipicolinate reductase (DHDPR), catalyzing the conversion of dihydrodipicolinate to tetrahydrodipicolinate. However, it was shown in E.coli that the substrate of the enzymatic reaction is not dihydrodipicolinate (DHDP) but in fact (2S,4S)-4-hydroxy-2,3,4,5-tetrahydrodipicolinic acid (HTPA), the product released by the DapA-catalyzed reaction.</text>
</comment>
<accession>Q73I13</accession>
<protein>
    <recommendedName>
        <fullName evidence="1">4-hydroxy-tetrahydrodipicolinate reductase</fullName>
        <shortName evidence="1">HTPA reductase</shortName>
        <ecNumber evidence="1">1.17.1.8</ecNumber>
    </recommendedName>
</protein>
<reference key="1">
    <citation type="journal article" date="2004" name="PLoS Biol.">
        <title>Phylogenomics of the reproductive parasite Wolbachia pipientis wMel: a streamlined genome overrun by mobile genetic elements.</title>
        <authorList>
            <person name="Wu M."/>
            <person name="Sun L.V."/>
            <person name="Vamathevan J.J."/>
            <person name="Riegler M."/>
            <person name="DeBoy R.T."/>
            <person name="Brownlie J.C."/>
            <person name="McGraw E.A."/>
            <person name="Martin W."/>
            <person name="Esser C."/>
            <person name="Ahmadinejad N."/>
            <person name="Wiegand C."/>
            <person name="Madupu R."/>
            <person name="Beanan M.J."/>
            <person name="Brinkac L.M."/>
            <person name="Daugherty S.C."/>
            <person name="Durkin A.S."/>
            <person name="Kolonay J.F."/>
            <person name="Nelson W.C."/>
            <person name="Mohamoud Y."/>
            <person name="Lee P."/>
            <person name="Berry K.J."/>
            <person name="Young M.B."/>
            <person name="Utterback T.R."/>
            <person name="Weidman J.F."/>
            <person name="Nierman W.C."/>
            <person name="Paulsen I.T."/>
            <person name="Nelson K.E."/>
            <person name="Tettelin H."/>
            <person name="O'Neill S.L."/>
            <person name="Eisen J.A."/>
        </authorList>
    </citation>
    <scope>NUCLEOTIDE SEQUENCE [LARGE SCALE GENOMIC DNA]</scope>
</reference>
<organism>
    <name type="scientific">Wolbachia pipientis wMel</name>
    <dbReference type="NCBI Taxonomy" id="163164"/>
    <lineage>
        <taxon>Bacteria</taxon>
        <taxon>Pseudomonadati</taxon>
        <taxon>Pseudomonadota</taxon>
        <taxon>Alphaproteobacteria</taxon>
        <taxon>Rickettsiales</taxon>
        <taxon>Anaplasmataceae</taxon>
        <taxon>Wolbachieae</taxon>
        <taxon>Wolbachia</taxon>
    </lineage>
</organism>
<evidence type="ECO:0000255" key="1">
    <source>
        <dbReference type="HAMAP-Rule" id="MF_00102"/>
    </source>
</evidence>
<evidence type="ECO:0000305" key="2"/>
<sequence>MKIRVGVIGCLGRMGKKILNELITNTKVEIAGAVARSGSKYIDSDIGPIIANLGIKVTSSISGIFESSDVVIDFTTKECMLDCLKAAVKFKTPLVSGTTGIEGVDLKEYAAEVPILWSANMSVGVNVLLKLVKKAAELLGNEYDVEIWEMHHNLKKDSPSGTAIELGKTIANASKVDFQSNQYLHSGSNIRKKGGIGFAVSRGGGVIGDHSVMFVNSDERIELNHKAIDRTTFARGAVQAAVWLYENKREIPGLYSMQDVI</sequence>